<accession>Q9FL59</accession>
<accession>Q93ZA2</accession>
<proteinExistence type="evidence at protein level"/>
<dbReference type="EMBL" id="AB010697">
    <property type="protein sequence ID" value="BAB11143.1"/>
    <property type="molecule type" value="Genomic_DNA"/>
</dbReference>
<dbReference type="EMBL" id="CP002688">
    <property type="protein sequence ID" value="AED91075.1"/>
    <property type="molecule type" value="Genomic_DNA"/>
</dbReference>
<dbReference type="EMBL" id="AY057690">
    <property type="protein sequence ID" value="AAL15320.1"/>
    <property type="molecule type" value="mRNA"/>
</dbReference>
<dbReference type="EMBL" id="AY133622">
    <property type="protein sequence ID" value="AAM91452.1"/>
    <property type="molecule type" value="mRNA"/>
</dbReference>
<dbReference type="RefSeq" id="NP_568175.2">
    <property type="nucleotide sequence ID" value="NM_120768.3"/>
</dbReference>
<dbReference type="SMR" id="Q9FL59"/>
<dbReference type="FunCoup" id="Q9FL59">
    <property type="interactions" value="627"/>
</dbReference>
<dbReference type="STRING" id="3702.Q9FL59"/>
<dbReference type="TCDB" id="9.A.57.1.5">
    <property type="family name" value="the extended-synaptotagmin (e-syt) family"/>
</dbReference>
<dbReference type="PaxDb" id="3702-AT5G06850.1"/>
<dbReference type="ProteomicsDB" id="230041"/>
<dbReference type="EnsemblPlants" id="AT5G06850.1">
    <property type="protein sequence ID" value="AT5G06850.1"/>
    <property type="gene ID" value="AT5G06850"/>
</dbReference>
<dbReference type="GeneID" id="830576"/>
<dbReference type="Gramene" id="AT5G06850.1">
    <property type="protein sequence ID" value="AT5G06850.1"/>
    <property type="gene ID" value="AT5G06850"/>
</dbReference>
<dbReference type="KEGG" id="ath:AT5G06850"/>
<dbReference type="Araport" id="AT5G06850"/>
<dbReference type="TAIR" id="AT5G06850">
    <property type="gene designation" value="FTIP1"/>
</dbReference>
<dbReference type="eggNOG" id="ENOG502QR9H">
    <property type="taxonomic scope" value="Eukaryota"/>
</dbReference>
<dbReference type="HOGENOM" id="CLU_003762_1_0_1"/>
<dbReference type="InParanoid" id="Q9FL59"/>
<dbReference type="OMA" id="KTTNPMW"/>
<dbReference type="OrthoDB" id="67700at2759"/>
<dbReference type="PhylomeDB" id="Q9FL59"/>
<dbReference type="PRO" id="PR:Q9FL59"/>
<dbReference type="Proteomes" id="UP000006548">
    <property type="component" value="Chromosome 5"/>
</dbReference>
<dbReference type="ExpressionAtlas" id="Q9FL59">
    <property type="expression patterns" value="baseline and differential"/>
</dbReference>
<dbReference type="GO" id="GO:0005783">
    <property type="term" value="C:endoplasmic reticulum"/>
    <property type="evidence" value="ECO:0000314"/>
    <property type="project" value="UniProtKB"/>
</dbReference>
<dbReference type="GO" id="GO:0005789">
    <property type="term" value="C:endoplasmic reticulum membrane"/>
    <property type="evidence" value="ECO:0007669"/>
    <property type="project" value="UniProtKB-SubCell"/>
</dbReference>
<dbReference type="GO" id="GO:0009506">
    <property type="term" value="C:plasmodesma"/>
    <property type="evidence" value="ECO:0000314"/>
    <property type="project" value="TAIR"/>
</dbReference>
<dbReference type="GO" id="GO:0009511">
    <property type="term" value="C:plasmodesmatal endoplasmic reticulum"/>
    <property type="evidence" value="ECO:0000314"/>
    <property type="project" value="UniProtKB"/>
</dbReference>
<dbReference type="GO" id="GO:0046872">
    <property type="term" value="F:metal ion binding"/>
    <property type="evidence" value="ECO:0007669"/>
    <property type="project" value="UniProtKB-KW"/>
</dbReference>
<dbReference type="GO" id="GO:0009908">
    <property type="term" value="P:flower development"/>
    <property type="evidence" value="ECO:0007669"/>
    <property type="project" value="UniProtKB-KW"/>
</dbReference>
<dbReference type="GO" id="GO:0048574">
    <property type="term" value="P:long-day photoperiodism, flowering"/>
    <property type="evidence" value="ECO:0000315"/>
    <property type="project" value="UniProtKB"/>
</dbReference>
<dbReference type="GO" id="GO:0009911">
    <property type="term" value="P:positive regulation of flower development"/>
    <property type="evidence" value="ECO:0000315"/>
    <property type="project" value="UniProtKB"/>
</dbReference>
<dbReference type="GO" id="GO:0048578">
    <property type="term" value="P:positive regulation of long-day photoperiodism, flowering"/>
    <property type="evidence" value="ECO:0007669"/>
    <property type="project" value="EnsemblPlants"/>
</dbReference>
<dbReference type="GO" id="GO:0010228">
    <property type="term" value="P:vegetative to reproductive phase transition of meristem"/>
    <property type="evidence" value="ECO:0000315"/>
    <property type="project" value="UniProtKB"/>
</dbReference>
<dbReference type="CDD" id="cd08378">
    <property type="entry name" value="C2B_MCTP_PRT_plant"/>
    <property type="match status" value="1"/>
</dbReference>
<dbReference type="CDD" id="cd04019">
    <property type="entry name" value="C2C_MCTP_PRT_plant"/>
    <property type="match status" value="1"/>
</dbReference>
<dbReference type="CDD" id="cd08379">
    <property type="entry name" value="C2D_MCTP_PRT_plant"/>
    <property type="match status" value="1"/>
</dbReference>
<dbReference type="FunFam" id="2.60.40.150:FF:000090">
    <property type="entry name" value="C2 domain-containing protein"/>
    <property type="match status" value="1"/>
</dbReference>
<dbReference type="FunFam" id="2.60.40.150:FF:000119">
    <property type="entry name" value="C2 domain-containing protein"/>
    <property type="match status" value="1"/>
</dbReference>
<dbReference type="FunFam" id="2.60.40.150:FF:000128">
    <property type="entry name" value="C2 domain-containing protein"/>
    <property type="match status" value="1"/>
</dbReference>
<dbReference type="Gene3D" id="2.60.40.150">
    <property type="entry name" value="C2 domain"/>
    <property type="match status" value="3"/>
</dbReference>
<dbReference type="InterPro" id="IPR000008">
    <property type="entry name" value="C2_dom"/>
</dbReference>
<dbReference type="InterPro" id="IPR035892">
    <property type="entry name" value="C2_domain_sf"/>
</dbReference>
<dbReference type="InterPro" id="IPR047257">
    <property type="entry name" value="C2B_MCTP_PRT_plant"/>
</dbReference>
<dbReference type="InterPro" id="IPR047258">
    <property type="entry name" value="C2C_MCTP_PRT_plant"/>
</dbReference>
<dbReference type="InterPro" id="IPR047255">
    <property type="entry name" value="C2D_MCTP_PRT_plant"/>
</dbReference>
<dbReference type="InterPro" id="IPR013583">
    <property type="entry name" value="MCTP_C"/>
</dbReference>
<dbReference type="InterPro" id="IPR047259">
    <property type="entry name" value="QUIRKY-like"/>
</dbReference>
<dbReference type="PANTHER" id="PTHR31425:SF37">
    <property type="entry name" value="FT-INTERACTING PROTEIN 1"/>
    <property type="match status" value="1"/>
</dbReference>
<dbReference type="PANTHER" id="PTHR31425">
    <property type="entry name" value="PHOSPHORIBOSYLANTHRANILATE TRANSFERASE ISOFORM 1"/>
    <property type="match status" value="1"/>
</dbReference>
<dbReference type="Pfam" id="PF00168">
    <property type="entry name" value="C2"/>
    <property type="match status" value="3"/>
</dbReference>
<dbReference type="Pfam" id="PF08372">
    <property type="entry name" value="PRT_C"/>
    <property type="match status" value="1"/>
</dbReference>
<dbReference type="SMART" id="SM00239">
    <property type="entry name" value="C2"/>
    <property type="match status" value="3"/>
</dbReference>
<dbReference type="SUPFAM" id="SSF49562">
    <property type="entry name" value="C2 domain (Calcium/lipid-binding domain, CaLB)"/>
    <property type="match status" value="3"/>
</dbReference>
<dbReference type="PROSITE" id="PS50004">
    <property type="entry name" value="C2"/>
    <property type="match status" value="3"/>
</dbReference>
<protein>
    <recommendedName>
        <fullName evidence="7">FT-interacting protein 1</fullName>
    </recommendedName>
    <alternativeName>
        <fullName evidence="8">Multiple C2 domain and transmembrane region protein 1</fullName>
    </alternativeName>
</protein>
<comment type="function">
    <text evidence="4 6 8">Involved in the export of FT from the phloem companion cells to the sieve elements through the plasmodesmata (PubMed:22529749). Regulates flowering time under long days (PubMed:22529749, PubMed:29259105). May function as a signaling molecule by regulating the trafficking of other regulators (PubMed:29259105).</text>
</comment>
<comment type="cofactor">
    <cofactor evidence="2">
        <name>Ca(2+)</name>
        <dbReference type="ChEBI" id="CHEBI:29108"/>
    </cofactor>
</comment>
<comment type="subunit">
    <text evidence="4 8">Interacts with FT in phloem companion cells.</text>
</comment>
<comment type="subcellular location">
    <subcellularLocation>
        <location evidence="4 6">Endoplasmic reticulum membrane</location>
        <topology evidence="1">Multi-pass membrane protein</topology>
    </subcellularLocation>
    <subcellularLocation>
        <location evidence="4">Cell junction</location>
        <location evidence="4">Plasmodesma</location>
    </subcellularLocation>
    <text evidence="4">Localized in plasmodesmata between companion cells and sieve elements.</text>
</comment>
<comment type="tissue specificity">
    <text evidence="4 6">Expressed in the vascular tissues of roots, cotyledons and rosette leaves (PubMed:22529749, PubMed:29259105). Specifically located in the phloem including companion cells (PubMed:22529749). Observed in flowers (PubMed:29259105). Not detected in the shoot apical meristem (PubMed:22529749, PubMed:29259105).</text>
</comment>
<comment type="developmental stage">
    <text evidence="6">Present in developing flowers.</text>
</comment>
<comment type="induction">
    <text evidence="4 5">Up-regulated by APL/FE (PubMed:26239308). Not regulated by photoperiod, circadian rhythm under long days, vernalization or gibberellin treatment (PubMed:22529749).</text>
</comment>
<comment type="disruption phenotype">
    <text evidence="4 6">Late flowering under long days.</text>
</comment>
<comment type="miscellaneous">
    <text evidence="4">Unlike other flowering promoters, overexpression of FTIP1 causes late flowering due to the deregulation of FT transport out of the phloem system.</text>
</comment>
<comment type="similarity">
    <text evidence="9">Belongs to the MCTP family.</text>
</comment>
<organism>
    <name type="scientific">Arabidopsis thaliana</name>
    <name type="common">Mouse-ear cress</name>
    <dbReference type="NCBI Taxonomy" id="3702"/>
    <lineage>
        <taxon>Eukaryota</taxon>
        <taxon>Viridiplantae</taxon>
        <taxon>Streptophyta</taxon>
        <taxon>Embryophyta</taxon>
        <taxon>Tracheophyta</taxon>
        <taxon>Spermatophyta</taxon>
        <taxon>Magnoliopsida</taxon>
        <taxon>eudicotyledons</taxon>
        <taxon>Gunneridae</taxon>
        <taxon>Pentapetalae</taxon>
        <taxon>rosids</taxon>
        <taxon>malvids</taxon>
        <taxon>Brassicales</taxon>
        <taxon>Brassicaceae</taxon>
        <taxon>Camelineae</taxon>
        <taxon>Arabidopsis</taxon>
    </lineage>
</organism>
<name>FTIP1_ARATH</name>
<reference key="1">
    <citation type="journal article" date="1998" name="DNA Res.">
        <title>Structural analysis of Arabidopsis thaliana chromosome 5. V. Sequence features of the regions of 1,381,565 bp covered by twenty one physically assigned P1 and TAC clones.</title>
        <authorList>
            <person name="Kaneko T."/>
            <person name="Kotani H."/>
            <person name="Nakamura Y."/>
            <person name="Sato S."/>
            <person name="Asamizu E."/>
            <person name="Miyajima N."/>
            <person name="Tabata S."/>
        </authorList>
    </citation>
    <scope>NUCLEOTIDE SEQUENCE [LARGE SCALE GENOMIC DNA]</scope>
    <source>
        <strain>cv. Columbia</strain>
    </source>
</reference>
<reference key="2">
    <citation type="journal article" date="2017" name="Plant J.">
        <title>Araport11: a complete reannotation of the Arabidopsis thaliana reference genome.</title>
        <authorList>
            <person name="Cheng C.Y."/>
            <person name="Krishnakumar V."/>
            <person name="Chan A.P."/>
            <person name="Thibaud-Nissen F."/>
            <person name="Schobel S."/>
            <person name="Town C.D."/>
        </authorList>
    </citation>
    <scope>GENOME REANNOTATION</scope>
    <source>
        <strain>cv. Columbia</strain>
    </source>
</reference>
<reference key="3">
    <citation type="journal article" date="2003" name="Science">
        <title>Empirical analysis of transcriptional activity in the Arabidopsis genome.</title>
        <authorList>
            <person name="Yamada K."/>
            <person name="Lim J."/>
            <person name="Dale J.M."/>
            <person name="Chen H."/>
            <person name="Shinn P."/>
            <person name="Palm C.J."/>
            <person name="Southwick A.M."/>
            <person name="Wu H.C."/>
            <person name="Kim C.J."/>
            <person name="Nguyen M."/>
            <person name="Pham P.K."/>
            <person name="Cheuk R.F."/>
            <person name="Karlin-Newmann G."/>
            <person name="Liu S.X."/>
            <person name="Lam B."/>
            <person name="Sakano H."/>
            <person name="Wu T."/>
            <person name="Yu G."/>
            <person name="Miranda M."/>
            <person name="Quach H.L."/>
            <person name="Tripp M."/>
            <person name="Chang C.H."/>
            <person name="Lee J.M."/>
            <person name="Toriumi M.J."/>
            <person name="Chan M.M."/>
            <person name="Tang C.C."/>
            <person name="Onodera C.S."/>
            <person name="Deng J.M."/>
            <person name="Akiyama K."/>
            <person name="Ansari Y."/>
            <person name="Arakawa T."/>
            <person name="Banh J."/>
            <person name="Banno F."/>
            <person name="Bowser L."/>
            <person name="Brooks S.Y."/>
            <person name="Carninci P."/>
            <person name="Chao Q."/>
            <person name="Choy N."/>
            <person name="Enju A."/>
            <person name="Goldsmith A.D."/>
            <person name="Gurjal M."/>
            <person name="Hansen N.F."/>
            <person name="Hayashizaki Y."/>
            <person name="Johnson-Hopson C."/>
            <person name="Hsuan V.W."/>
            <person name="Iida K."/>
            <person name="Karnes M."/>
            <person name="Khan S."/>
            <person name="Koesema E."/>
            <person name="Ishida J."/>
            <person name="Jiang P.X."/>
            <person name="Jones T."/>
            <person name="Kawai J."/>
            <person name="Kamiya A."/>
            <person name="Meyers C."/>
            <person name="Nakajima M."/>
            <person name="Narusaka M."/>
            <person name="Seki M."/>
            <person name="Sakurai T."/>
            <person name="Satou M."/>
            <person name="Tamse R."/>
            <person name="Vaysberg M."/>
            <person name="Wallender E.K."/>
            <person name="Wong C."/>
            <person name="Yamamura Y."/>
            <person name="Yuan S."/>
            <person name="Shinozaki K."/>
            <person name="Davis R.W."/>
            <person name="Theologis A."/>
            <person name="Ecker J.R."/>
        </authorList>
    </citation>
    <scope>NUCLEOTIDE SEQUENCE [LARGE SCALE MRNA] OF 88-794</scope>
    <source>
        <strain>cv. Columbia</strain>
    </source>
</reference>
<reference key="4">
    <citation type="journal article" date="2012" name="PLoS Biol.">
        <title>FTIP1 is an essential regulator required for florigen transport.</title>
        <authorList>
            <person name="Liu L."/>
            <person name="Liu C."/>
            <person name="Hou X."/>
            <person name="Xi W."/>
            <person name="Shen L."/>
            <person name="Tao Z."/>
            <person name="Wang Y."/>
            <person name="Yu H."/>
        </authorList>
    </citation>
    <scope>FUNCTION</scope>
    <scope>DISRUPTION PHENOTYPE</scope>
    <scope>TISSUE SPECIFICITY</scope>
    <scope>LACK OF INDUCTION</scope>
    <scope>SUBCELLULAR LOCATION</scope>
    <scope>INTERACTION WITH FT</scope>
</reference>
<reference key="5">
    <citation type="journal article" date="2015" name="Plant J.">
        <title>FE, a phloem-specific Myb-related protein, promotes flowering through transcriptional activation of FLOWERING LOCUS T and FLOWERING LOCUS T INTERACTING PROTEIN 1.</title>
        <authorList>
            <person name="Abe M."/>
            <person name="Kaya H."/>
            <person name="Watanabe-Taneda A."/>
            <person name="Shibuta M."/>
            <person name="Yamaguchi A."/>
            <person name="Sakamoto T."/>
            <person name="Kurata T."/>
            <person name="Ausin I."/>
            <person name="Araki T."/>
            <person name="Alonso-Blanco C."/>
        </authorList>
    </citation>
    <scope>INDUCTION BY APL/FE</scope>
</reference>
<reference key="6">
    <citation type="journal article" date="2018" name="Plant Physiol.">
        <title>Characterization of multiple C2 domain and transmembrane region proteins in Arabidopsis.</title>
        <authorList>
            <person name="Liu L."/>
            <person name="Li C."/>
            <person name="Liang Z."/>
            <person name="Yu H."/>
        </authorList>
    </citation>
    <scope>FUNCTION</scope>
    <scope>DISRUPTION PHENOTYPE</scope>
    <scope>TISSUE SPECIFICITY</scope>
    <scope>INTERACTION WITH FT</scope>
    <scope>DEVELOPMENTAL STAGE</scope>
    <scope>SUBCELLULAR LOCATION</scope>
    <scope>GENE FAMILY</scope>
    <scope>NOMENCLATURE</scope>
    <source>
        <strain>cv. Columbia</strain>
    </source>
</reference>
<feature type="chain" id="PRO_0000436871" description="FT-interacting protein 1">
    <location>
        <begin position="1"/>
        <end position="794"/>
    </location>
</feature>
<feature type="transmembrane region" description="Helical" evidence="1">
    <location>
        <begin position="510"/>
        <end position="532"/>
    </location>
</feature>
<feature type="transmembrane region" description="Helical" evidence="1">
    <location>
        <begin position="595"/>
        <end position="615"/>
    </location>
</feature>
<feature type="transmembrane region" description="Helical" evidence="1">
    <location>
        <begin position="619"/>
        <end position="639"/>
    </location>
</feature>
<feature type="transmembrane region" description="Helical" evidence="1">
    <location>
        <begin position="737"/>
        <end position="757"/>
    </location>
</feature>
<feature type="domain" description="C2 1" evidence="2">
    <location>
        <begin position="37"/>
        <end position="158"/>
    </location>
</feature>
<feature type="domain" description="C2 2" evidence="2">
    <location>
        <begin position="198"/>
        <end position="321"/>
    </location>
</feature>
<feature type="domain" description="C2 3" evidence="2">
    <location>
        <begin position="364"/>
        <end position="492"/>
    </location>
</feature>
<feature type="region of interest" description="Disordered" evidence="3">
    <location>
        <begin position="1"/>
        <end position="34"/>
    </location>
</feature>
<feature type="compositionally biased region" description="Basic and acidic residues" evidence="3">
    <location>
        <begin position="1"/>
        <end position="27"/>
    </location>
</feature>
<feature type="binding site" evidence="2">
    <location>
        <position position="76"/>
    </location>
    <ligand>
        <name>Ca(2+)</name>
        <dbReference type="ChEBI" id="CHEBI:29108"/>
        <label>1</label>
    </ligand>
</feature>
<feature type="binding site" evidence="2">
    <location>
        <position position="123"/>
    </location>
    <ligand>
        <name>Ca(2+)</name>
        <dbReference type="ChEBI" id="CHEBI:29108"/>
        <label>1</label>
    </ligand>
</feature>
<feature type="binding site" evidence="2">
    <location>
        <position position="123"/>
    </location>
    <ligand>
        <name>Ca(2+)</name>
        <dbReference type="ChEBI" id="CHEBI:29108"/>
        <label>2</label>
    </ligand>
</feature>
<feature type="binding site" evidence="2">
    <location>
        <position position="125"/>
    </location>
    <ligand>
        <name>Ca(2+)</name>
        <dbReference type="ChEBI" id="CHEBI:29108"/>
        <label>1</label>
    </ligand>
</feature>
<feature type="binding site" evidence="2">
    <location>
        <position position="125"/>
    </location>
    <ligand>
        <name>Ca(2+)</name>
        <dbReference type="ChEBI" id="CHEBI:29108"/>
        <label>2</label>
    </ligand>
</feature>
<feature type="binding site" evidence="2">
    <location>
        <position position="131"/>
    </location>
    <ligand>
        <name>Ca(2+)</name>
        <dbReference type="ChEBI" id="CHEBI:29108"/>
        <label>2</label>
    </ligand>
</feature>
<sequence length="794" mass="91003">MAAKDGAKSQEDYKLKDMKPELGERWPHGGQRGGTGWIGSERAASTYDLVEQMFYLYVRVVKAKDLPPNPVTSNCDPYVEVKIGNYKGKTKHFEKRTNPEWNQVFAFSKDKVQSSTVEVFVRDKEMVTRDEYIGKVVFDMREVPTRVPPDSPLAPQWYRLEDRRGESKKRGEVMVAVWLGTQADEAFPDAWHSDASSVQGEGVQSVRSKVYVSPKLWYLRVNVIEAQDVEPSDRSQPPQAFVKVQVGNQILKTKLCPNKTTNPMWNEDLVFVAAEPFEEQFFLTVENKVTPAKDEVMGRLISPLSVFEKRLDHRAVHSKWYNLEKFGFGALEGDKRHELKFSSRIHLRVCLEGGYHVMDESTLYISDVKPTARQLWKSPIGILEVGILSAQGLSPMKTKDGKATTDPYCVAKYGQKWVRTRTIIDSSSPKWNEQYTWEVYDPCTVITLGVFDNCHLGGSEKSNSGAKVDSRIGKVRIRLSTLEADRIYTHSYPLLVLQTKGLKKMGEVQLAVRFTCLSLAHMIYLYGHPLLPKMHYLHPFTVNQLDSLRYQAMSIVAARLSRAEPPLRKENVEYMLDVDSHMWSMRRSKANFFRIVSVFAGLIAMSKWLGDVCYWKNPLTTILFHVLFFILICYPELILPTTFLYMFLIGLWNFRFRPRHPAHMDTKVSWAEAASPDELDEEFDTFPTSKGQDVVKMRYDRLRSVAGRIQMVVGDIATQGERFQALLSWRDPRATCLFVIFCLVAAMILYVTPFKIIALAGGMFWMRHPKFRSKMPSAPSNFFRKLPSKADCML</sequence>
<gene>
    <name evidence="7" type="primary">FTIP1</name>
    <name evidence="8" type="synonym">MCTP1</name>
    <name evidence="10" type="ordered locus">At5g06850</name>
    <name evidence="11" type="ORF">MOJ9.2</name>
</gene>
<evidence type="ECO:0000255" key="1"/>
<evidence type="ECO:0000255" key="2">
    <source>
        <dbReference type="PROSITE-ProRule" id="PRU00041"/>
    </source>
</evidence>
<evidence type="ECO:0000256" key="3">
    <source>
        <dbReference type="SAM" id="MobiDB-lite"/>
    </source>
</evidence>
<evidence type="ECO:0000269" key="4">
    <source>
    </source>
</evidence>
<evidence type="ECO:0000269" key="5">
    <source>
    </source>
</evidence>
<evidence type="ECO:0000269" key="6">
    <source>
    </source>
</evidence>
<evidence type="ECO:0000303" key="7">
    <source>
    </source>
</evidence>
<evidence type="ECO:0000303" key="8">
    <source>
    </source>
</evidence>
<evidence type="ECO:0000305" key="9"/>
<evidence type="ECO:0000312" key="10">
    <source>
        <dbReference type="Araport" id="AT5G06850"/>
    </source>
</evidence>
<evidence type="ECO:0000312" key="11">
    <source>
        <dbReference type="EMBL" id="BAB11143.1"/>
    </source>
</evidence>
<keyword id="KW-0106">Calcium</keyword>
<keyword id="KW-0965">Cell junction</keyword>
<keyword id="KW-0256">Endoplasmic reticulum</keyword>
<keyword id="KW-0287">Flowering</keyword>
<keyword id="KW-0472">Membrane</keyword>
<keyword id="KW-0479">Metal-binding</keyword>
<keyword id="KW-1185">Reference proteome</keyword>
<keyword id="KW-0677">Repeat</keyword>
<keyword id="KW-0812">Transmembrane</keyword>
<keyword id="KW-1133">Transmembrane helix</keyword>